<evidence type="ECO:0000255" key="1">
    <source>
        <dbReference type="HAMAP-Rule" id="MF_01818"/>
    </source>
</evidence>
<accession>C1AAD9</accession>
<feature type="chain" id="PRO_1000216009" description="Ribonuclease Z">
    <location>
        <begin position="1"/>
        <end position="314"/>
    </location>
</feature>
<feature type="active site" description="Proton acceptor" evidence="1">
    <location>
        <position position="65"/>
    </location>
</feature>
<feature type="binding site" evidence="1">
    <location>
        <position position="61"/>
    </location>
    <ligand>
        <name>Zn(2+)</name>
        <dbReference type="ChEBI" id="CHEBI:29105"/>
        <label>1</label>
        <note>catalytic</note>
    </ligand>
</feature>
<feature type="binding site" evidence="1">
    <location>
        <position position="63"/>
    </location>
    <ligand>
        <name>Zn(2+)</name>
        <dbReference type="ChEBI" id="CHEBI:29105"/>
        <label>1</label>
        <note>catalytic</note>
    </ligand>
</feature>
<feature type="binding site" evidence="1">
    <location>
        <position position="65"/>
    </location>
    <ligand>
        <name>Zn(2+)</name>
        <dbReference type="ChEBI" id="CHEBI:29105"/>
        <label>2</label>
        <note>catalytic</note>
    </ligand>
</feature>
<feature type="binding site" evidence="1">
    <location>
        <position position="66"/>
    </location>
    <ligand>
        <name>Zn(2+)</name>
        <dbReference type="ChEBI" id="CHEBI:29105"/>
        <label>2</label>
        <note>catalytic</note>
    </ligand>
</feature>
<feature type="binding site" evidence="1">
    <location>
        <position position="139"/>
    </location>
    <ligand>
        <name>Zn(2+)</name>
        <dbReference type="ChEBI" id="CHEBI:29105"/>
        <label>1</label>
        <note>catalytic</note>
    </ligand>
</feature>
<feature type="binding site" evidence="1">
    <location>
        <position position="211"/>
    </location>
    <ligand>
        <name>Zn(2+)</name>
        <dbReference type="ChEBI" id="CHEBI:29105"/>
        <label>1</label>
        <note>catalytic</note>
    </ligand>
</feature>
<feature type="binding site" evidence="1">
    <location>
        <position position="211"/>
    </location>
    <ligand>
        <name>Zn(2+)</name>
        <dbReference type="ChEBI" id="CHEBI:29105"/>
        <label>2</label>
        <note>catalytic</note>
    </ligand>
</feature>
<feature type="binding site" evidence="1">
    <location>
        <position position="269"/>
    </location>
    <ligand>
        <name>Zn(2+)</name>
        <dbReference type="ChEBI" id="CHEBI:29105"/>
        <label>2</label>
        <note>catalytic</note>
    </ligand>
</feature>
<gene>
    <name evidence="1" type="primary">rnz</name>
    <name type="ordered locus">GAU_2695</name>
</gene>
<organism>
    <name type="scientific">Gemmatimonas aurantiaca (strain DSM 14586 / JCM 11422 / NBRC 100505 / T-27)</name>
    <dbReference type="NCBI Taxonomy" id="379066"/>
    <lineage>
        <taxon>Bacteria</taxon>
        <taxon>Pseudomonadati</taxon>
        <taxon>Gemmatimonadota</taxon>
        <taxon>Gemmatimonadia</taxon>
        <taxon>Gemmatimonadales</taxon>
        <taxon>Gemmatimonadaceae</taxon>
        <taxon>Gemmatimonas</taxon>
    </lineage>
</organism>
<protein>
    <recommendedName>
        <fullName evidence="1">Ribonuclease Z</fullName>
        <shortName evidence="1">RNase Z</shortName>
        <ecNumber evidence="1">3.1.26.11</ecNumber>
    </recommendedName>
    <alternativeName>
        <fullName evidence="1">tRNA 3 endonuclease</fullName>
    </alternativeName>
    <alternativeName>
        <fullName evidence="1">tRNase Z</fullName>
    </alternativeName>
</protein>
<name>RNZ_GEMAT</name>
<sequence length="314" mass="34693">MPLLVRFLGTAASRPTVERGVSAISLTREGETLLFDCGEGTQRQMMRYGVSFALSDVFFTHVHSDHLLGITGLLRTMALQGRTEPLRLWTPRSTAKTLRQCINIGGERTTFPVEICELEAGSSVKRGEDYRIDTFAVDHRGTASLGYAIVEEERRGRFNPDLARELGIPEGPLWGRIHRGEPIMLDDGRVIESSVLVGERRRGRRIVITGDTRPCDGTLAAAQDADLLIHESTFADEEGARAQETGHSTAREAAEIALKAGVRRLVLTHISARYSRDTRDLEQEARSVFPNTLIARDGTEIELALTEELADTPS</sequence>
<comment type="function">
    <text evidence="1">Zinc phosphodiesterase, which displays some tRNA 3'-processing endonuclease activity. Probably involved in tRNA maturation, by removing a 3'-trailer from precursor tRNA.</text>
</comment>
<comment type="catalytic activity">
    <reaction evidence="1">
        <text>Endonucleolytic cleavage of RNA, removing extra 3' nucleotides from tRNA precursor, generating 3' termini of tRNAs. A 3'-hydroxy group is left at the tRNA terminus and a 5'-phosphoryl group is left at the trailer molecule.</text>
        <dbReference type="EC" id="3.1.26.11"/>
    </reaction>
</comment>
<comment type="cofactor">
    <cofactor evidence="1">
        <name>Zn(2+)</name>
        <dbReference type="ChEBI" id="CHEBI:29105"/>
    </cofactor>
    <text evidence="1">Binds 2 Zn(2+) ions.</text>
</comment>
<comment type="subunit">
    <text evidence="1">Homodimer.</text>
</comment>
<comment type="similarity">
    <text evidence="1">Belongs to the RNase Z family.</text>
</comment>
<reference key="1">
    <citation type="submission" date="2006-03" db="EMBL/GenBank/DDBJ databases">
        <title>Complete genome sequence of Gemmatimonas aurantiaca T-27 that represents a novel phylum Gemmatimonadetes.</title>
        <authorList>
            <person name="Takasaki K."/>
            <person name="Ichikawa N."/>
            <person name="Miura H."/>
            <person name="Matsushita S."/>
            <person name="Watanabe Y."/>
            <person name="Oguchi A."/>
            <person name="Ankai A."/>
            <person name="Yashiro I."/>
            <person name="Takahashi M."/>
            <person name="Terui Y."/>
            <person name="Fukui S."/>
            <person name="Yokoyama H."/>
            <person name="Tanikawa S."/>
            <person name="Hanada S."/>
            <person name="Kamagata Y."/>
            <person name="Fujita N."/>
        </authorList>
    </citation>
    <scope>NUCLEOTIDE SEQUENCE [LARGE SCALE GENOMIC DNA]</scope>
    <source>
        <strain>DSM 14586 / JCM 11422 / NBRC 100505 / T-27</strain>
    </source>
</reference>
<keyword id="KW-0255">Endonuclease</keyword>
<keyword id="KW-0378">Hydrolase</keyword>
<keyword id="KW-0479">Metal-binding</keyword>
<keyword id="KW-0540">Nuclease</keyword>
<keyword id="KW-1185">Reference proteome</keyword>
<keyword id="KW-0819">tRNA processing</keyword>
<keyword id="KW-0862">Zinc</keyword>
<proteinExistence type="inferred from homology"/>
<dbReference type="EC" id="3.1.26.11" evidence="1"/>
<dbReference type="EMBL" id="AP009153">
    <property type="protein sequence ID" value="BAH39737.1"/>
    <property type="molecule type" value="Genomic_DNA"/>
</dbReference>
<dbReference type="RefSeq" id="WP_015894506.1">
    <property type="nucleotide sequence ID" value="NC_012489.1"/>
</dbReference>
<dbReference type="SMR" id="C1AAD9"/>
<dbReference type="KEGG" id="gau:GAU_2695"/>
<dbReference type="eggNOG" id="COG1234">
    <property type="taxonomic scope" value="Bacteria"/>
</dbReference>
<dbReference type="HOGENOM" id="CLU_031317_2_1_0"/>
<dbReference type="OrthoDB" id="9800940at2"/>
<dbReference type="Proteomes" id="UP000002209">
    <property type="component" value="Chromosome"/>
</dbReference>
<dbReference type="GO" id="GO:0042781">
    <property type="term" value="F:3'-tRNA processing endoribonuclease activity"/>
    <property type="evidence" value="ECO:0007669"/>
    <property type="project" value="UniProtKB-UniRule"/>
</dbReference>
<dbReference type="GO" id="GO:0008270">
    <property type="term" value="F:zinc ion binding"/>
    <property type="evidence" value="ECO:0007669"/>
    <property type="project" value="UniProtKB-UniRule"/>
</dbReference>
<dbReference type="CDD" id="cd07717">
    <property type="entry name" value="RNaseZ_ZiPD-like_MBL-fold"/>
    <property type="match status" value="1"/>
</dbReference>
<dbReference type="FunFam" id="3.60.15.10:FF:000002">
    <property type="entry name" value="Ribonuclease Z"/>
    <property type="match status" value="1"/>
</dbReference>
<dbReference type="Gene3D" id="3.60.15.10">
    <property type="entry name" value="Ribonuclease Z/Hydroxyacylglutathione hydrolase-like"/>
    <property type="match status" value="1"/>
</dbReference>
<dbReference type="HAMAP" id="MF_01818">
    <property type="entry name" value="RNase_Z_BN"/>
    <property type="match status" value="1"/>
</dbReference>
<dbReference type="InterPro" id="IPR001279">
    <property type="entry name" value="Metallo-B-lactamas"/>
</dbReference>
<dbReference type="InterPro" id="IPR036866">
    <property type="entry name" value="RibonucZ/Hydroxyglut_hydro"/>
</dbReference>
<dbReference type="InterPro" id="IPR013471">
    <property type="entry name" value="RNase_Z/BN"/>
</dbReference>
<dbReference type="NCBIfam" id="NF000801">
    <property type="entry name" value="PRK00055.1-3"/>
    <property type="match status" value="1"/>
</dbReference>
<dbReference type="NCBIfam" id="TIGR02651">
    <property type="entry name" value="RNase_Z"/>
    <property type="match status" value="1"/>
</dbReference>
<dbReference type="PANTHER" id="PTHR46018">
    <property type="entry name" value="ZINC PHOSPHODIESTERASE ELAC PROTEIN 1"/>
    <property type="match status" value="1"/>
</dbReference>
<dbReference type="PANTHER" id="PTHR46018:SF2">
    <property type="entry name" value="ZINC PHOSPHODIESTERASE ELAC PROTEIN 1"/>
    <property type="match status" value="1"/>
</dbReference>
<dbReference type="Pfam" id="PF12706">
    <property type="entry name" value="Lactamase_B_2"/>
    <property type="match status" value="2"/>
</dbReference>
<dbReference type="SUPFAM" id="SSF56281">
    <property type="entry name" value="Metallo-hydrolase/oxidoreductase"/>
    <property type="match status" value="1"/>
</dbReference>